<evidence type="ECO:0000255" key="1">
    <source>
        <dbReference type="HAMAP-Rule" id="MF_01569"/>
    </source>
</evidence>
<gene>
    <name evidence="1" type="primary">proS</name>
    <name type="ordered locus">Swol_0892</name>
</gene>
<comment type="function">
    <text evidence="1">Catalyzes the attachment of proline to tRNA(Pro) in a two-step reaction: proline is first activated by ATP to form Pro-AMP and then transferred to the acceptor end of tRNA(Pro). As ProRS can inadvertently accommodate and process non-cognate amino acids such as alanine and cysteine, to avoid such errors it has two additional distinct editing activities against alanine. One activity is designated as 'pretransfer' editing and involves the tRNA(Pro)-independent hydrolysis of activated Ala-AMP. The other activity is designated 'posttransfer' editing and involves deacylation of mischarged Ala-tRNA(Pro). The misacylated Cys-tRNA(Pro) is not edited by ProRS.</text>
</comment>
<comment type="catalytic activity">
    <reaction evidence="1">
        <text>tRNA(Pro) + L-proline + ATP = L-prolyl-tRNA(Pro) + AMP + diphosphate</text>
        <dbReference type="Rhea" id="RHEA:14305"/>
        <dbReference type="Rhea" id="RHEA-COMP:9700"/>
        <dbReference type="Rhea" id="RHEA-COMP:9702"/>
        <dbReference type="ChEBI" id="CHEBI:30616"/>
        <dbReference type="ChEBI" id="CHEBI:33019"/>
        <dbReference type="ChEBI" id="CHEBI:60039"/>
        <dbReference type="ChEBI" id="CHEBI:78442"/>
        <dbReference type="ChEBI" id="CHEBI:78532"/>
        <dbReference type="ChEBI" id="CHEBI:456215"/>
        <dbReference type="EC" id="6.1.1.15"/>
    </reaction>
</comment>
<comment type="subunit">
    <text evidence="1">Homodimer.</text>
</comment>
<comment type="subcellular location">
    <subcellularLocation>
        <location evidence="1">Cytoplasm</location>
    </subcellularLocation>
</comment>
<comment type="domain">
    <text evidence="1">Consists of three domains: the N-terminal catalytic domain, the editing domain and the C-terminal anticodon-binding domain.</text>
</comment>
<comment type="similarity">
    <text evidence="1">Belongs to the class-II aminoacyl-tRNA synthetase family. ProS type 1 subfamily.</text>
</comment>
<accession>Q0AYJ4</accession>
<organism>
    <name type="scientific">Syntrophomonas wolfei subsp. wolfei (strain DSM 2245B / Goettingen)</name>
    <dbReference type="NCBI Taxonomy" id="335541"/>
    <lineage>
        <taxon>Bacteria</taxon>
        <taxon>Bacillati</taxon>
        <taxon>Bacillota</taxon>
        <taxon>Clostridia</taxon>
        <taxon>Eubacteriales</taxon>
        <taxon>Syntrophomonadaceae</taxon>
        <taxon>Syntrophomonas</taxon>
    </lineage>
</organism>
<proteinExistence type="inferred from homology"/>
<feature type="chain" id="PRO_0000288387" description="Proline--tRNA ligase">
    <location>
        <begin position="1"/>
        <end position="570"/>
    </location>
</feature>
<keyword id="KW-0030">Aminoacyl-tRNA synthetase</keyword>
<keyword id="KW-0067">ATP-binding</keyword>
<keyword id="KW-0963">Cytoplasm</keyword>
<keyword id="KW-0436">Ligase</keyword>
<keyword id="KW-0547">Nucleotide-binding</keyword>
<keyword id="KW-0648">Protein biosynthesis</keyword>
<keyword id="KW-1185">Reference proteome</keyword>
<sequence length="570" mass="64735">MKASELFFPTLREVPSEAEVLSHQLLLRAGFIRKATAGVYSYLPLANRVLKKIMNIVREEMDRAGGQEVILPIIQPAELWKKSGRWEVYGDEMFRLKDRHNRDFALGPTHEEIITTLVDADVHSYRHLPLLLYQIQNKYRDEIRPRFGLMRGREFIMKDLYSFDIDEEGLDISYHKMYEAYNRIFQRLKLQYRVVEADSGAIGGNESHEFMVLAENGEAEIVYCKNCDYGANTEKAVCSLEEPKVTEEEQLELEKVHTPGQRTIQDLVDYMNIPKEKQIKTLIYYADEELVAAIVRGDRELNEIKFKNVLGCNQLFMADETAVKQLCSAGFGSLGPVGLPLKTYIDLEVSQMKNFACGANEDDYHFINVNLGRDFTPAGINDIRNAVAGDSCPVCSAPLYSMRGIEVGHIFKLGTKYSEVLEANYLDQKGQEKPMVMGCYGIGISRTMAAAVEQSADENGIVWPLPITPFEVIIVPVNSKNEEQMQAAWSLYEEFKQEGLETIVDDRDERAGVKFKDADLIGIPLRITIGPRSLQEKQVEVKKRSDKDIELVPLDAVSSRVKLMLKEMSK</sequence>
<dbReference type="EC" id="6.1.1.15" evidence="1"/>
<dbReference type="EMBL" id="CP000448">
    <property type="protein sequence ID" value="ABI68210.1"/>
    <property type="molecule type" value="Genomic_DNA"/>
</dbReference>
<dbReference type="RefSeq" id="WP_011640315.1">
    <property type="nucleotide sequence ID" value="NC_008346.1"/>
</dbReference>
<dbReference type="SMR" id="Q0AYJ4"/>
<dbReference type="STRING" id="335541.Swol_0892"/>
<dbReference type="KEGG" id="swo:Swol_0892"/>
<dbReference type="eggNOG" id="COG0442">
    <property type="taxonomic scope" value="Bacteria"/>
</dbReference>
<dbReference type="HOGENOM" id="CLU_016739_0_0_9"/>
<dbReference type="OrthoDB" id="9809052at2"/>
<dbReference type="Proteomes" id="UP000001968">
    <property type="component" value="Chromosome"/>
</dbReference>
<dbReference type="GO" id="GO:0005829">
    <property type="term" value="C:cytosol"/>
    <property type="evidence" value="ECO:0007669"/>
    <property type="project" value="TreeGrafter"/>
</dbReference>
<dbReference type="GO" id="GO:0002161">
    <property type="term" value="F:aminoacyl-tRNA deacylase activity"/>
    <property type="evidence" value="ECO:0007669"/>
    <property type="project" value="InterPro"/>
</dbReference>
<dbReference type="GO" id="GO:0005524">
    <property type="term" value="F:ATP binding"/>
    <property type="evidence" value="ECO:0007669"/>
    <property type="project" value="UniProtKB-UniRule"/>
</dbReference>
<dbReference type="GO" id="GO:0140096">
    <property type="term" value="F:catalytic activity, acting on a protein"/>
    <property type="evidence" value="ECO:0007669"/>
    <property type="project" value="UniProtKB-ARBA"/>
</dbReference>
<dbReference type="GO" id="GO:0004827">
    <property type="term" value="F:proline-tRNA ligase activity"/>
    <property type="evidence" value="ECO:0007669"/>
    <property type="project" value="UniProtKB-UniRule"/>
</dbReference>
<dbReference type="GO" id="GO:0016740">
    <property type="term" value="F:transferase activity"/>
    <property type="evidence" value="ECO:0007669"/>
    <property type="project" value="UniProtKB-ARBA"/>
</dbReference>
<dbReference type="GO" id="GO:0006433">
    <property type="term" value="P:prolyl-tRNA aminoacylation"/>
    <property type="evidence" value="ECO:0007669"/>
    <property type="project" value="UniProtKB-UniRule"/>
</dbReference>
<dbReference type="CDD" id="cd04334">
    <property type="entry name" value="ProRS-INS"/>
    <property type="match status" value="1"/>
</dbReference>
<dbReference type="CDD" id="cd00861">
    <property type="entry name" value="ProRS_anticodon_short"/>
    <property type="match status" value="1"/>
</dbReference>
<dbReference type="CDD" id="cd00779">
    <property type="entry name" value="ProRS_core_prok"/>
    <property type="match status" value="1"/>
</dbReference>
<dbReference type="FunFam" id="3.30.930.10:FF:000065">
    <property type="entry name" value="Proline--tRNA ligase"/>
    <property type="match status" value="1"/>
</dbReference>
<dbReference type="FunFam" id="3.30.930.10:FF:000066">
    <property type="entry name" value="Proline--tRNA ligase"/>
    <property type="match status" value="1"/>
</dbReference>
<dbReference type="FunFam" id="3.40.50.800:FF:000011">
    <property type="entry name" value="Proline--tRNA ligase"/>
    <property type="match status" value="1"/>
</dbReference>
<dbReference type="Gene3D" id="3.40.50.800">
    <property type="entry name" value="Anticodon-binding domain"/>
    <property type="match status" value="1"/>
</dbReference>
<dbReference type="Gene3D" id="3.30.930.10">
    <property type="entry name" value="Bira Bifunctional Protein, Domain 2"/>
    <property type="match status" value="2"/>
</dbReference>
<dbReference type="HAMAP" id="MF_01569">
    <property type="entry name" value="Pro_tRNA_synth_type1"/>
    <property type="match status" value="1"/>
</dbReference>
<dbReference type="InterPro" id="IPR002314">
    <property type="entry name" value="aa-tRNA-synt_IIb"/>
</dbReference>
<dbReference type="InterPro" id="IPR006195">
    <property type="entry name" value="aa-tRNA-synth_II"/>
</dbReference>
<dbReference type="InterPro" id="IPR045864">
    <property type="entry name" value="aa-tRNA-synth_II/BPL/LPL"/>
</dbReference>
<dbReference type="InterPro" id="IPR004154">
    <property type="entry name" value="Anticodon-bd"/>
</dbReference>
<dbReference type="InterPro" id="IPR036621">
    <property type="entry name" value="Anticodon-bd_dom_sf"/>
</dbReference>
<dbReference type="InterPro" id="IPR002316">
    <property type="entry name" value="Pro-tRNA-ligase_IIa"/>
</dbReference>
<dbReference type="InterPro" id="IPR004500">
    <property type="entry name" value="Pro-tRNA-synth_IIa_bac-type"/>
</dbReference>
<dbReference type="InterPro" id="IPR023717">
    <property type="entry name" value="Pro-tRNA-Synthase_IIa_type1"/>
</dbReference>
<dbReference type="InterPro" id="IPR050062">
    <property type="entry name" value="Pro-tRNA_synthetase"/>
</dbReference>
<dbReference type="InterPro" id="IPR044140">
    <property type="entry name" value="ProRS_anticodon_short"/>
</dbReference>
<dbReference type="InterPro" id="IPR033730">
    <property type="entry name" value="ProRS_core_prok"/>
</dbReference>
<dbReference type="InterPro" id="IPR036754">
    <property type="entry name" value="YbaK/aa-tRNA-synt-asso_dom_sf"/>
</dbReference>
<dbReference type="InterPro" id="IPR007214">
    <property type="entry name" value="YbaK/aa-tRNA-synth-assoc-dom"/>
</dbReference>
<dbReference type="NCBIfam" id="NF006625">
    <property type="entry name" value="PRK09194.1"/>
    <property type="match status" value="1"/>
</dbReference>
<dbReference type="NCBIfam" id="TIGR00409">
    <property type="entry name" value="proS_fam_II"/>
    <property type="match status" value="1"/>
</dbReference>
<dbReference type="PANTHER" id="PTHR42753">
    <property type="entry name" value="MITOCHONDRIAL RIBOSOME PROTEIN L39/PROLYL-TRNA LIGASE FAMILY MEMBER"/>
    <property type="match status" value="1"/>
</dbReference>
<dbReference type="PANTHER" id="PTHR42753:SF2">
    <property type="entry name" value="PROLINE--TRNA LIGASE"/>
    <property type="match status" value="1"/>
</dbReference>
<dbReference type="Pfam" id="PF03129">
    <property type="entry name" value="HGTP_anticodon"/>
    <property type="match status" value="1"/>
</dbReference>
<dbReference type="Pfam" id="PF00587">
    <property type="entry name" value="tRNA-synt_2b"/>
    <property type="match status" value="1"/>
</dbReference>
<dbReference type="Pfam" id="PF04073">
    <property type="entry name" value="tRNA_edit"/>
    <property type="match status" value="1"/>
</dbReference>
<dbReference type="PIRSF" id="PIRSF001535">
    <property type="entry name" value="ProRS_1"/>
    <property type="match status" value="1"/>
</dbReference>
<dbReference type="PRINTS" id="PR01046">
    <property type="entry name" value="TRNASYNTHPRO"/>
</dbReference>
<dbReference type="SUPFAM" id="SSF52954">
    <property type="entry name" value="Class II aaRS ABD-related"/>
    <property type="match status" value="1"/>
</dbReference>
<dbReference type="SUPFAM" id="SSF55681">
    <property type="entry name" value="Class II aaRS and biotin synthetases"/>
    <property type="match status" value="1"/>
</dbReference>
<dbReference type="SUPFAM" id="SSF55826">
    <property type="entry name" value="YbaK/ProRS associated domain"/>
    <property type="match status" value="1"/>
</dbReference>
<dbReference type="PROSITE" id="PS50862">
    <property type="entry name" value="AA_TRNA_LIGASE_II"/>
    <property type="match status" value="1"/>
</dbReference>
<protein>
    <recommendedName>
        <fullName evidence="1">Proline--tRNA ligase</fullName>
        <ecNumber evidence="1">6.1.1.15</ecNumber>
    </recommendedName>
    <alternativeName>
        <fullName evidence="1">Prolyl-tRNA synthetase</fullName>
        <shortName evidence="1">ProRS</shortName>
    </alternativeName>
</protein>
<reference key="1">
    <citation type="journal article" date="2010" name="Environ. Microbiol.">
        <title>The genome of Syntrophomonas wolfei: new insights into syntrophic metabolism and biohydrogen production.</title>
        <authorList>
            <person name="Sieber J.R."/>
            <person name="Sims D.R."/>
            <person name="Han C."/>
            <person name="Kim E."/>
            <person name="Lykidis A."/>
            <person name="Lapidus A.L."/>
            <person name="McDonnald E."/>
            <person name="Rohlin L."/>
            <person name="Culley D.E."/>
            <person name="Gunsalus R."/>
            <person name="McInerney M.J."/>
        </authorList>
    </citation>
    <scope>NUCLEOTIDE SEQUENCE [LARGE SCALE GENOMIC DNA]</scope>
    <source>
        <strain>DSM 2245B / Goettingen</strain>
    </source>
</reference>
<name>SYP_SYNWW</name>